<protein>
    <recommendedName>
        <fullName evidence="1">Arginine repressor</fullName>
    </recommendedName>
</protein>
<sequence>MRSSAKQEELVKAFKALLKEEKFSSQGEIVAALQEQGFDNINQSKVSRMLTKFGAVRTRNAKMEMVYCLPAELGVPTTSSPLKNLVLDIDYNDAVVVIHTSPGAAQLIARLLDSLGKAEGILGTIAGDDTIFTTPANGFTVKDLYEAILELFDQEL</sequence>
<keyword id="KW-0028">Amino-acid biosynthesis</keyword>
<keyword id="KW-0055">Arginine biosynthesis</keyword>
<keyword id="KW-0963">Cytoplasm</keyword>
<keyword id="KW-0238">DNA-binding</keyword>
<keyword id="KW-0678">Repressor</keyword>
<keyword id="KW-0804">Transcription</keyword>
<keyword id="KW-0805">Transcription regulation</keyword>
<organism>
    <name type="scientific">Shigella boydii serotype 4 (strain Sb227)</name>
    <dbReference type="NCBI Taxonomy" id="300268"/>
    <lineage>
        <taxon>Bacteria</taxon>
        <taxon>Pseudomonadati</taxon>
        <taxon>Pseudomonadota</taxon>
        <taxon>Gammaproteobacteria</taxon>
        <taxon>Enterobacterales</taxon>
        <taxon>Enterobacteriaceae</taxon>
        <taxon>Shigella</taxon>
    </lineage>
</organism>
<reference key="1">
    <citation type="journal article" date="2005" name="Nucleic Acids Res.">
        <title>Genome dynamics and diversity of Shigella species, the etiologic agents of bacillary dysentery.</title>
        <authorList>
            <person name="Yang F."/>
            <person name="Yang J."/>
            <person name="Zhang X."/>
            <person name="Chen L."/>
            <person name="Jiang Y."/>
            <person name="Yan Y."/>
            <person name="Tang X."/>
            <person name="Wang J."/>
            <person name="Xiong Z."/>
            <person name="Dong J."/>
            <person name="Xue Y."/>
            <person name="Zhu Y."/>
            <person name="Xu X."/>
            <person name="Sun L."/>
            <person name="Chen S."/>
            <person name="Nie H."/>
            <person name="Peng J."/>
            <person name="Xu J."/>
            <person name="Wang Y."/>
            <person name="Yuan Z."/>
            <person name="Wen Y."/>
            <person name="Yao Z."/>
            <person name="Shen Y."/>
            <person name="Qiang B."/>
            <person name="Hou Y."/>
            <person name="Yu J."/>
            <person name="Jin Q."/>
        </authorList>
    </citation>
    <scope>NUCLEOTIDE SEQUENCE [LARGE SCALE GENOMIC DNA]</scope>
    <source>
        <strain>Sb227</strain>
    </source>
</reference>
<name>ARGR_SHIBS</name>
<accession>Q31WA5</accession>
<dbReference type="EMBL" id="CP000036">
    <property type="protein sequence ID" value="ABB67653.1"/>
    <property type="molecule type" value="Genomic_DNA"/>
</dbReference>
<dbReference type="RefSeq" id="WP_001257846.1">
    <property type="nucleotide sequence ID" value="NC_007613.1"/>
</dbReference>
<dbReference type="SMR" id="Q31WA5"/>
<dbReference type="GeneID" id="93778748"/>
<dbReference type="KEGG" id="sbo:SBO_3152"/>
<dbReference type="HOGENOM" id="CLU_097103_2_0_6"/>
<dbReference type="UniPathway" id="UPA00068"/>
<dbReference type="Proteomes" id="UP000007067">
    <property type="component" value="Chromosome"/>
</dbReference>
<dbReference type="GO" id="GO:0005737">
    <property type="term" value="C:cytoplasm"/>
    <property type="evidence" value="ECO:0007669"/>
    <property type="project" value="UniProtKB-SubCell"/>
</dbReference>
<dbReference type="GO" id="GO:0034618">
    <property type="term" value="F:arginine binding"/>
    <property type="evidence" value="ECO:0007669"/>
    <property type="project" value="InterPro"/>
</dbReference>
<dbReference type="GO" id="GO:0003677">
    <property type="term" value="F:DNA binding"/>
    <property type="evidence" value="ECO:0007669"/>
    <property type="project" value="UniProtKB-KW"/>
</dbReference>
<dbReference type="GO" id="GO:0003700">
    <property type="term" value="F:DNA-binding transcription factor activity"/>
    <property type="evidence" value="ECO:0007669"/>
    <property type="project" value="UniProtKB-UniRule"/>
</dbReference>
<dbReference type="GO" id="GO:0006526">
    <property type="term" value="P:L-arginine biosynthetic process"/>
    <property type="evidence" value="ECO:0007669"/>
    <property type="project" value="UniProtKB-UniPathway"/>
</dbReference>
<dbReference type="GO" id="GO:0051259">
    <property type="term" value="P:protein complex oligomerization"/>
    <property type="evidence" value="ECO:0007669"/>
    <property type="project" value="InterPro"/>
</dbReference>
<dbReference type="GO" id="GO:1900079">
    <property type="term" value="P:regulation of arginine biosynthetic process"/>
    <property type="evidence" value="ECO:0007669"/>
    <property type="project" value="UniProtKB-UniRule"/>
</dbReference>
<dbReference type="FunFam" id="1.10.10.10:FF:000074">
    <property type="entry name" value="Arginine repressor"/>
    <property type="match status" value="1"/>
</dbReference>
<dbReference type="FunFam" id="3.30.1360.40:FF:000004">
    <property type="entry name" value="Arginine repressor"/>
    <property type="match status" value="1"/>
</dbReference>
<dbReference type="Gene3D" id="3.30.1360.40">
    <property type="match status" value="1"/>
</dbReference>
<dbReference type="Gene3D" id="1.10.10.10">
    <property type="entry name" value="Winged helix-like DNA-binding domain superfamily/Winged helix DNA-binding domain"/>
    <property type="match status" value="1"/>
</dbReference>
<dbReference type="HAMAP" id="MF_00173">
    <property type="entry name" value="Arg_repressor"/>
    <property type="match status" value="1"/>
</dbReference>
<dbReference type="InterPro" id="IPR001669">
    <property type="entry name" value="Arg_repress"/>
</dbReference>
<dbReference type="InterPro" id="IPR020899">
    <property type="entry name" value="Arg_repress_C"/>
</dbReference>
<dbReference type="InterPro" id="IPR036251">
    <property type="entry name" value="Arg_repress_C_sf"/>
</dbReference>
<dbReference type="InterPro" id="IPR020900">
    <property type="entry name" value="Arg_repress_DNA-bd"/>
</dbReference>
<dbReference type="InterPro" id="IPR036388">
    <property type="entry name" value="WH-like_DNA-bd_sf"/>
</dbReference>
<dbReference type="InterPro" id="IPR036390">
    <property type="entry name" value="WH_DNA-bd_sf"/>
</dbReference>
<dbReference type="NCBIfam" id="TIGR01529">
    <property type="entry name" value="argR_whole"/>
    <property type="match status" value="1"/>
</dbReference>
<dbReference type="NCBIfam" id="NF003457">
    <property type="entry name" value="PRK05066.1"/>
    <property type="match status" value="1"/>
</dbReference>
<dbReference type="PANTHER" id="PTHR34471">
    <property type="entry name" value="ARGININE REPRESSOR"/>
    <property type="match status" value="1"/>
</dbReference>
<dbReference type="PANTHER" id="PTHR34471:SF1">
    <property type="entry name" value="ARGININE REPRESSOR"/>
    <property type="match status" value="1"/>
</dbReference>
<dbReference type="Pfam" id="PF01316">
    <property type="entry name" value="Arg_repressor"/>
    <property type="match status" value="1"/>
</dbReference>
<dbReference type="Pfam" id="PF02863">
    <property type="entry name" value="Arg_repressor_C"/>
    <property type="match status" value="1"/>
</dbReference>
<dbReference type="PRINTS" id="PR01467">
    <property type="entry name" value="ARGREPRESSOR"/>
</dbReference>
<dbReference type="SUPFAM" id="SSF55252">
    <property type="entry name" value="C-terminal domain of arginine repressor"/>
    <property type="match status" value="1"/>
</dbReference>
<dbReference type="SUPFAM" id="SSF46785">
    <property type="entry name" value="Winged helix' DNA-binding domain"/>
    <property type="match status" value="1"/>
</dbReference>
<comment type="function">
    <text evidence="1">Regulates arginine biosynthesis genes.</text>
</comment>
<comment type="pathway">
    <text>Amino-acid biosynthesis; L-arginine biosynthesis [regulation].</text>
</comment>
<comment type="subcellular location">
    <subcellularLocation>
        <location evidence="1">Cytoplasm</location>
    </subcellularLocation>
</comment>
<comment type="similarity">
    <text evidence="1">Belongs to the ArgR family.</text>
</comment>
<proteinExistence type="inferred from homology"/>
<evidence type="ECO:0000255" key="1">
    <source>
        <dbReference type="HAMAP-Rule" id="MF_00173"/>
    </source>
</evidence>
<gene>
    <name evidence="1" type="primary">argR</name>
    <name type="ordered locus">SBO_3152</name>
</gene>
<feature type="chain" id="PRO_1000023597" description="Arginine repressor">
    <location>
        <begin position="1"/>
        <end position="156"/>
    </location>
</feature>